<feature type="transit peptide" description="Mitochondrion" evidence="1">
    <location>
        <begin position="1"/>
        <end position="32"/>
    </location>
</feature>
<feature type="chain" id="PRO_0000035932" description="Ubiquinone biosynthesis O-methyltransferase, mitochondrial">
    <location>
        <begin position="33"/>
        <end position="312"/>
    </location>
</feature>
<feature type="binding site" evidence="1">
    <location>
        <position position="68"/>
    </location>
    <ligand>
        <name>S-adenosyl-L-methionine</name>
        <dbReference type="ChEBI" id="CHEBI:59789"/>
    </ligand>
</feature>
<feature type="binding site" evidence="1">
    <location>
        <position position="130"/>
    </location>
    <ligand>
        <name>S-adenosyl-L-methionine</name>
        <dbReference type="ChEBI" id="CHEBI:59789"/>
    </ligand>
</feature>
<feature type="binding site" evidence="1">
    <location>
        <position position="153"/>
    </location>
    <ligand>
        <name>S-adenosyl-L-methionine</name>
        <dbReference type="ChEBI" id="CHEBI:59789"/>
    </ligand>
</feature>
<feature type="binding site" evidence="1">
    <location>
        <position position="196"/>
    </location>
    <ligand>
        <name>S-adenosyl-L-methionine</name>
        <dbReference type="ChEBI" id="CHEBI:59789"/>
    </ligand>
</feature>
<feature type="binding site" evidence="1">
    <location>
        <position position="197"/>
    </location>
    <ligand>
        <name>Mg(2+)</name>
        <dbReference type="ChEBI" id="CHEBI:18420"/>
    </ligand>
</feature>
<feature type="binding site" evidence="1">
    <location>
        <position position="200"/>
    </location>
    <ligand>
        <name>Mg(2+)</name>
        <dbReference type="ChEBI" id="CHEBI:18420"/>
    </ligand>
</feature>
<feature type="binding site" evidence="1">
    <location>
        <position position="201"/>
    </location>
    <ligand>
        <name>Mg(2+)</name>
        <dbReference type="ChEBI" id="CHEBI:18420"/>
    </ligand>
</feature>
<gene>
    <name evidence="1 9" type="primary">COQ3</name>
    <name evidence="12" type="ordered locus">YOL096C</name>
    <name type="ORF">HRF316</name>
</gene>
<sequence length="312" mass="36331">MLLRSRFLKVIHVRKQLSACSRFAIQTQTRCKSTDASEDEVKHFQELAPTWWDTDGSQRILHKMNLTRLDFVQRTVRNQVKIQNPEIFVPGFNYKEFLPEYVCDNIQREMQESIETNLDKRPEVSVLDVGCGGGILSESLARLKWVKNVQGIDLTRDCIMVAKEHAKKDPMLEGKINYECKALEDVTGQFDIITCMEMLEHVDMPSEILRHCWSRLNPEKGILFLSTINRDLISWFTTIFMGENVLKIVPKGTHHLSKYINSKEILAWFNDNYSGQFRLLDLKGTMYLPYQGWVEHDCSDVGNYFMAIQRLN</sequence>
<organism>
    <name type="scientific">Saccharomyces cerevisiae (strain ATCC 204508 / S288c)</name>
    <name type="common">Baker's yeast</name>
    <dbReference type="NCBI Taxonomy" id="559292"/>
    <lineage>
        <taxon>Eukaryota</taxon>
        <taxon>Fungi</taxon>
        <taxon>Dikarya</taxon>
        <taxon>Ascomycota</taxon>
        <taxon>Saccharomycotina</taxon>
        <taxon>Saccharomycetes</taxon>
        <taxon>Saccharomycetales</taxon>
        <taxon>Saccharomycetaceae</taxon>
        <taxon>Saccharomyces</taxon>
    </lineage>
</organism>
<dbReference type="EC" id="2.1.1.64" evidence="1 2"/>
<dbReference type="EC" id="2.1.1.-" evidence="1"/>
<dbReference type="EC" id="2.1.1.114" evidence="1 2"/>
<dbReference type="EMBL" id="M73270">
    <property type="protein sequence ID" value="AAB63972.1"/>
    <property type="status" value="ALT_INIT"/>
    <property type="molecule type" value="Genomic_DNA"/>
</dbReference>
<dbReference type="EMBL" id="Z48149">
    <property type="protein sequence ID" value="CAA88165.1"/>
    <property type="status" value="ALT_INIT"/>
    <property type="molecule type" value="Genomic_DNA"/>
</dbReference>
<dbReference type="EMBL" id="Z74838">
    <property type="protein sequence ID" value="CAA99109.1"/>
    <property type="status" value="ALT_INIT"/>
    <property type="molecule type" value="Genomic_DNA"/>
</dbReference>
<dbReference type="EMBL" id="Z74837">
    <property type="protein sequence ID" value="CAA99108.1"/>
    <property type="status" value="ALT_INIT"/>
    <property type="molecule type" value="Genomic_DNA"/>
</dbReference>
<dbReference type="EMBL" id="BK006948">
    <property type="protein sequence ID" value="DAA10688.1"/>
    <property type="molecule type" value="Genomic_DNA"/>
</dbReference>
<dbReference type="PIR" id="A41171">
    <property type="entry name" value="A41171"/>
</dbReference>
<dbReference type="RefSeq" id="NP_014545.2">
    <property type="nucleotide sequence ID" value="NM_001183350.1"/>
</dbReference>
<dbReference type="SMR" id="P27680"/>
<dbReference type="BioGRID" id="34306">
    <property type="interactions" value="95"/>
</dbReference>
<dbReference type="ComplexPortal" id="CPX-1155">
    <property type="entry name" value="CoQ biosynthetic complex"/>
</dbReference>
<dbReference type="DIP" id="DIP-7399N"/>
<dbReference type="FunCoup" id="P27680">
    <property type="interactions" value="428"/>
</dbReference>
<dbReference type="IntAct" id="P27680">
    <property type="interactions" value="35"/>
</dbReference>
<dbReference type="STRING" id="4932.YOL096C"/>
<dbReference type="PaxDb" id="4932-YOL096C"/>
<dbReference type="PeptideAtlas" id="P27680"/>
<dbReference type="EnsemblFungi" id="YOL096C_mRNA">
    <property type="protein sequence ID" value="YOL096C"/>
    <property type="gene ID" value="YOL096C"/>
</dbReference>
<dbReference type="GeneID" id="854057"/>
<dbReference type="KEGG" id="sce:YOL096C"/>
<dbReference type="AGR" id="SGD:S000005456"/>
<dbReference type="SGD" id="S000005456">
    <property type="gene designation" value="COQ3"/>
</dbReference>
<dbReference type="VEuPathDB" id="FungiDB:YOL096C"/>
<dbReference type="eggNOG" id="KOG1270">
    <property type="taxonomic scope" value="Eukaryota"/>
</dbReference>
<dbReference type="GeneTree" id="ENSGT00390000007284"/>
<dbReference type="HOGENOM" id="CLU_042432_3_0_1"/>
<dbReference type="InParanoid" id="P27680"/>
<dbReference type="OMA" id="LASRWWD"/>
<dbReference type="OrthoDB" id="3265906at2759"/>
<dbReference type="BioCyc" id="MetaCyc:YOL096C-MONOMER"/>
<dbReference type="BioCyc" id="YEAST:YOL096C-MONOMER"/>
<dbReference type="BRENDA" id="2.1.1.114">
    <property type="organism ID" value="984"/>
</dbReference>
<dbReference type="BRENDA" id="2.1.1.222">
    <property type="organism ID" value="984"/>
</dbReference>
<dbReference type="BRENDA" id="2.1.1.64">
    <property type="organism ID" value="984"/>
</dbReference>
<dbReference type="Reactome" id="R-SCE-2142789">
    <property type="pathway name" value="Ubiquinol biosynthesis"/>
</dbReference>
<dbReference type="UniPathway" id="UPA00232"/>
<dbReference type="BioGRID-ORCS" id="854057">
    <property type="hits" value="0 hits in 10 CRISPR screens"/>
</dbReference>
<dbReference type="PRO" id="PR:P27680"/>
<dbReference type="Proteomes" id="UP000002311">
    <property type="component" value="Chromosome XV"/>
</dbReference>
<dbReference type="RNAct" id="P27680">
    <property type="molecule type" value="protein"/>
</dbReference>
<dbReference type="GO" id="GO:0031314">
    <property type="term" value="C:extrinsic component of mitochondrial inner membrane"/>
    <property type="evidence" value="ECO:0000314"/>
    <property type="project" value="WormBase"/>
</dbReference>
<dbReference type="GO" id="GO:0005743">
    <property type="term" value="C:mitochondrial inner membrane"/>
    <property type="evidence" value="ECO:0000314"/>
    <property type="project" value="SGD"/>
</dbReference>
<dbReference type="GO" id="GO:0005739">
    <property type="term" value="C:mitochondrion"/>
    <property type="evidence" value="ECO:0000314"/>
    <property type="project" value="SGD"/>
</dbReference>
<dbReference type="GO" id="GO:0061542">
    <property type="term" value="F:3-demethylubiquinol 3-O-methyltransferase activity"/>
    <property type="evidence" value="ECO:0000315"/>
    <property type="project" value="SGD"/>
</dbReference>
<dbReference type="GO" id="GO:0120537">
    <property type="term" value="F:3-demethylubiquinone 3-O-methyltransferase activity"/>
    <property type="evidence" value="ECO:0007669"/>
    <property type="project" value="RHEA"/>
</dbReference>
<dbReference type="GO" id="GO:0010420">
    <property type="term" value="F:polyprenyldihydroxybenzoate methyltransferase activity"/>
    <property type="evidence" value="ECO:0000315"/>
    <property type="project" value="SGD"/>
</dbReference>
<dbReference type="GO" id="GO:0032259">
    <property type="term" value="P:methylation"/>
    <property type="evidence" value="ECO:0007669"/>
    <property type="project" value="UniProtKB-KW"/>
</dbReference>
<dbReference type="GO" id="GO:0006744">
    <property type="term" value="P:ubiquinone biosynthetic process"/>
    <property type="evidence" value="ECO:0000314"/>
    <property type="project" value="SGD"/>
</dbReference>
<dbReference type="CDD" id="cd02440">
    <property type="entry name" value="AdoMet_MTases"/>
    <property type="match status" value="1"/>
</dbReference>
<dbReference type="Gene3D" id="3.40.50.150">
    <property type="entry name" value="Vaccinia Virus protein VP39"/>
    <property type="match status" value="1"/>
</dbReference>
<dbReference type="HAMAP" id="MF_00472">
    <property type="entry name" value="UbiG"/>
    <property type="match status" value="1"/>
</dbReference>
<dbReference type="InterPro" id="IPR029063">
    <property type="entry name" value="SAM-dependent_MTases_sf"/>
</dbReference>
<dbReference type="InterPro" id="IPR010233">
    <property type="entry name" value="UbiG_MeTrfase"/>
</dbReference>
<dbReference type="NCBIfam" id="TIGR01983">
    <property type="entry name" value="UbiG"/>
    <property type="match status" value="1"/>
</dbReference>
<dbReference type="PANTHER" id="PTHR43464">
    <property type="entry name" value="METHYLTRANSFERASE"/>
    <property type="match status" value="1"/>
</dbReference>
<dbReference type="PANTHER" id="PTHR43464:SF19">
    <property type="entry name" value="UBIQUINONE BIOSYNTHESIS O-METHYLTRANSFERASE, MITOCHONDRIAL"/>
    <property type="match status" value="1"/>
</dbReference>
<dbReference type="Pfam" id="PF13489">
    <property type="entry name" value="Methyltransf_23"/>
    <property type="match status" value="1"/>
</dbReference>
<dbReference type="SUPFAM" id="SSF53335">
    <property type="entry name" value="S-adenosyl-L-methionine-dependent methyltransferases"/>
    <property type="match status" value="1"/>
</dbReference>
<reference key="1">
    <citation type="journal article" date="1991" name="J. Biol. Chem.">
        <title>Ubiquinone biosynthesis in Saccharomyces cerevisiae. Isolation and sequence of COQ3, the 3,4-dihydroxy-5-hexaprenylbenzoate methyltransferase gene.</title>
        <authorList>
            <person name="Clarke C.F."/>
            <person name="Williams W."/>
            <person name="Teruya J.H."/>
        </authorList>
    </citation>
    <scope>NUCLEOTIDE SEQUENCE [GENOMIC DNA]</scope>
    <scope>INDUCTION</scope>
    <source>
        <strain>D273-10B/A1</strain>
    </source>
</reference>
<reference key="2">
    <citation type="journal article" date="1995" name="Yeast">
        <title>Sequence analysis of a 44 kb DNA fragment of yeast chromosome XV including the Ty1-H3 retrotransposon, the suf1(+) frameshift suppressor gene for tRNA-Gly, the yeast transfer RNA-Thr-1a and a delta element.</title>
        <authorList>
            <person name="Vandenbol M."/>
            <person name="Durand P."/>
            <person name="Portetelle D."/>
            <person name="Hilger F."/>
        </authorList>
    </citation>
    <scope>NUCLEOTIDE SEQUENCE [GENOMIC DNA]</scope>
</reference>
<reference key="3">
    <citation type="journal article" date="1997" name="Nature">
        <title>The nucleotide sequence of Saccharomyces cerevisiae chromosome XV.</title>
        <authorList>
            <person name="Dujon B."/>
            <person name="Albermann K."/>
            <person name="Aldea M."/>
            <person name="Alexandraki D."/>
            <person name="Ansorge W."/>
            <person name="Arino J."/>
            <person name="Benes V."/>
            <person name="Bohn C."/>
            <person name="Bolotin-Fukuhara M."/>
            <person name="Bordonne R."/>
            <person name="Boyer J."/>
            <person name="Camasses A."/>
            <person name="Casamayor A."/>
            <person name="Casas C."/>
            <person name="Cheret G."/>
            <person name="Cziepluch C."/>
            <person name="Daignan-Fornier B."/>
            <person name="Dang V.-D."/>
            <person name="de Haan M."/>
            <person name="Delius H."/>
            <person name="Durand P."/>
            <person name="Fairhead C."/>
            <person name="Feldmann H."/>
            <person name="Gaillon L."/>
            <person name="Galisson F."/>
            <person name="Gamo F.-J."/>
            <person name="Gancedo C."/>
            <person name="Goffeau A."/>
            <person name="Goulding S.E."/>
            <person name="Grivell L.A."/>
            <person name="Habbig B."/>
            <person name="Hand N.J."/>
            <person name="Hani J."/>
            <person name="Hattenhorst U."/>
            <person name="Hebling U."/>
            <person name="Hernando Y."/>
            <person name="Herrero E."/>
            <person name="Heumann K."/>
            <person name="Hiesel R."/>
            <person name="Hilger F."/>
            <person name="Hofmann B."/>
            <person name="Hollenberg C.P."/>
            <person name="Hughes B."/>
            <person name="Jauniaux J.-C."/>
            <person name="Kalogeropoulos A."/>
            <person name="Katsoulou C."/>
            <person name="Kordes E."/>
            <person name="Lafuente M.J."/>
            <person name="Landt O."/>
            <person name="Louis E.J."/>
            <person name="Maarse A.C."/>
            <person name="Madania A."/>
            <person name="Mannhaupt G."/>
            <person name="Marck C."/>
            <person name="Martin R.P."/>
            <person name="Mewes H.-W."/>
            <person name="Michaux G."/>
            <person name="Paces V."/>
            <person name="Parle-McDermott A.G."/>
            <person name="Pearson B.M."/>
            <person name="Perrin A."/>
            <person name="Pettersson B."/>
            <person name="Poch O."/>
            <person name="Pohl T.M."/>
            <person name="Poirey R."/>
            <person name="Portetelle D."/>
            <person name="Pujol A."/>
            <person name="Purnelle B."/>
            <person name="Ramezani Rad M."/>
            <person name="Rechmann S."/>
            <person name="Schwager C."/>
            <person name="Schweizer M."/>
            <person name="Sor F."/>
            <person name="Sterky F."/>
            <person name="Tarassov I.A."/>
            <person name="Teodoru C."/>
            <person name="Tettelin H."/>
            <person name="Thierry A."/>
            <person name="Tobiasch E."/>
            <person name="Tzermia M."/>
            <person name="Uhlen M."/>
            <person name="Unseld M."/>
            <person name="Valens M."/>
            <person name="Vandenbol M."/>
            <person name="Vetter I."/>
            <person name="Vlcek C."/>
            <person name="Voet M."/>
            <person name="Volckaert G."/>
            <person name="Voss H."/>
            <person name="Wambutt R."/>
            <person name="Wedler H."/>
            <person name="Wiemann S."/>
            <person name="Winsor B."/>
            <person name="Wolfe K.H."/>
            <person name="Zollner A."/>
            <person name="Zumstein E."/>
            <person name="Kleine K."/>
        </authorList>
    </citation>
    <scope>NUCLEOTIDE SEQUENCE [LARGE SCALE GENOMIC DNA]</scope>
    <source>
        <strain>ATCC 204508 / S288c</strain>
    </source>
</reference>
<reference key="4">
    <citation type="journal article" date="2014" name="G3 (Bethesda)">
        <title>The reference genome sequence of Saccharomyces cerevisiae: Then and now.</title>
        <authorList>
            <person name="Engel S.R."/>
            <person name="Dietrich F.S."/>
            <person name="Fisk D.G."/>
            <person name="Binkley G."/>
            <person name="Balakrishnan R."/>
            <person name="Costanzo M.C."/>
            <person name="Dwight S.S."/>
            <person name="Hitz B.C."/>
            <person name="Karra K."/>
            <person name="Nash R.S."/>
            <person name="Weng S."/>
            <person name="Wong E.D."/>
            <person name="Lloyd P."/>
            <person name="Skrzypek M.S."/>
            <person name="Miyasato S.R."/>
            <person name="Simison M."/>
            <person name="Cherry J.M."/>
        </authorList>
    </citation>
    <scope>GENOME REANNOTATION</scope>
    <source>
        <strain>ATCC 204508 / S288c</strain>
    </source>
</reference>
<reference key="5">
    <citation type="journal article" date="1999" name="J. Biol. Chem.">
        <title>Yeast and rat Coq3 and Escherichia coli UbiG polypeptides catalyze both O-methyltransferase steps in coenzyme Q biosynthesis.</title>
        <authorList>
            <person name="Poon W.W."/>
            <person name="Barkovich R.J."/>
            <person name="Hsu A.Y."/>
            <person name="Frankel A."/>
            <person name="Lee P.T."/>
            <person name="Shepherd J.N."/>
            <person name="Myles D.C."/>
            <person name="Clarke C.F."/>
        </authorList>
    </citation>
    <scope>FUNCTION</scope>
    <scope>CATALYTIC ACTIVITY</scope>
    <scope>SUBCELLULAR LOCATION</scope>
    <scope>PATHWAY</scope>
</reference>
<reference key="6">
    <citation type="journal article" date="2003" name="Nature">
        <title>Sequencing and comparison of yeast species to identify genes and regulatory elements.</title>
        <authorList>
            <person name="Kellis M."/>
            <person name="Patterson N."/>
            <person name="Endrizzi M."/>
            <person name="Birren B.W."/>
            <person name="Lander E.S."/>
        </authorList>
    </citation>
    <scope>IDENTIFICATION OF PROBABLE INITIATION SITE</scope>
</reference>
<reference key="7">
    <citation type="journal article" date="2003" name="Nature">
        <title>Global analysis of protein localization in budding yeast.</title>
        <authorList>
            <person name="Huh W.-K."/>
            <person name="Falvo J.V."/>
            <person name="Gerke L.C."/>
            <person name="Carroll A.S."/>
            <person name="Howson R.W."/>
            <person name="Weissman J.S."/>
            <person name="O'Shea E.K."/>
        </authorList>
    </citation>
    <scope>SUBCELLULAR LOCATION [LARGE SCALE ANALYSIS]</scope>
</reference>
<reference key="8">
    <citation type="journal article" date="2003" name="Nature">
        <title>Global analysis of protein expression in yeast.</title>
        <authorList>
            <person name="Ghaemmaghami S."/>
            <person name="Huh W.-K."/>
            <person name="Bower K."/>
            <person name="Howson R.W."/>
            <person name="Belle A."/>
            <person name="Dephoure N."/>
            <person name="O'Shea E.K."/>
            <person name="Weissman J.S."/>
        </authorList>
    </citation>
    <scope>LEVEL OF PROTEIN EXPRESSION [LARGE SCALE ANALYSIS]</scope>
</reference>
<reference key="9">
    <citation type="journal article" date="2003" name="Proc. Natl. Acad. Sci. U.S.A.">
        <title>The proteome of Saccharomyces cerevisiae mitochondria.</title>
        <authorList>
            <person name="Sickmann A."/>
            <person name="Reinders J."/>
            <person name="Wagner Y."/>
            <person name="Joppich C."/>
            <person name="Zahedi R.P."/>
            <person name="Meyer H.E."/>
            <person name="Schoenfisch B."/>
            <person name="Perschil I."/>
            <person name="Chacinska A."/>
            <person name="Guiard B."/>
            <person name="Rehling P."/>
            <person name="Pfanner N."/>
            <person name="Meisinger C."/>
        </authorList>
    </citation>
    <scope>SUBCELLULAR LOCATION [LARGE SCALE ANALYSIS]</scope>
    <source>
        <strain>ATCC 76625 / YPH499</strain>
    </source>
</reference>
<reference key="10">
    <citation type="journal article" date="2005" name="J. Biol. Chem.">
        <title>Coq3 and Coq4 define a polypeptide complex in yeast mitochondria for the biosynthesis of coenzyme Q.</title>
        <authorList>
            <person name="Marbois B.N."/>
            <person name="Gin P."/>
            <person name="Faull K.F."/>
            <person name="Poon W.W."/>
            <person name="Lee P.T."/>
            <person name="Strahan J."/>
            <person name="Shepherd J.N."/>
            <person name="Clarke C.F."/>
        </authorList>
    </citation>
    <scope>INTERACTION WITH COQ4</scope>
    <scope>SUBUNIT</scope>
</reference>
<reference key="11">
    <citation type="journal article" date="2014" name="Biochim. Biophys. Acta">
        <title>Coenzyme Q supplementation or over-expression of the yeast Coq8 putative kinase stabilizes multi-subunit Coq polypeptide complexes in yeast coq null mutants.</title>
        <authorList>
            <person name="He C.H."/>
            <person name="Xie L.X."/>
            <person name="Allan C.M."/>
            <person name="Tran U.C."/>
            <person name="Clarke C.F."/>
        </authorList>
    </citation>
    <scope>SUBUNIT</scope>
</reference>
<proteinExistence type="evidence at protein level"/>
<accession>P27680</accession>
<accession>D6W1X2</accession>
<name>COQ3_YEAST</name>
<evidence type="ECO:0000255" key="1">
    <source>
        <dbReference type="HAMAP-Rule" id="MF_03190"/>
    </source>
</evidence>
<evidence type="ECO:0000269" key="2">
    <source>
    </source>
</evidence>
<evidence type="ECO:0000269" key="3">
    <source>
    </source>
</evidence>
<evidence type="ECO:0000269" key="4">
    <source>
    </source>
</evidence>
<evidence type="ECO:0000269" key="5">
    <source>
    </source>
</evidence>
<evidence type="ECO:0000269" key="6">
    <source>
    </source>
</evidence>
<evidence type="ECO:0000269" key="7">
    <source>
    </source>
</evidence>
<evidence type="ECO:0000269" key="8">
    <source>
    </source>
</evidence>
<evidence type="ECO:0000303" key="9">
    <source>
    </source>
</evidence>
<evidence type="ECO:0000305" key="10"/>
<evidence type="ECO:0000305" key="11">
    <source>
    </source>
</evidence>
<evidence type="ECO:0000312" key="12">
    <source>
        <dbReference type="SGD" id="S000005456"/>
    </source>
</evidence>
<protein>
    <recommendedName>
        <fullName evidence="1 10">Ubiquinone biosynthesis O-methyltransferase, mitochondrial</fullName>
    </recommendedName>
    <alternativeName>
        <fullName evidence="1 9">3,4-dihydroxy-5-hexaprenylbenzoate methyltransferase</fullName>
        <shortName evidence="1 9">DHHB methyltransferase</shortName>
        <shortName evidence="1">DHHB-MT</shortName>
        <shortName evidence="1">DHHB-MTase</shortName>
    </alternativeName>
    <alternativeName>
        <fullName evidence="1">3-demethylubiquinol 3-O-methyltransferase</fullName>
        <ecNumber evidence="1 2">2.1.1.64</ecNumber>
    </alternativeName>
    <alternativeName>
        <fullName evidence="1">3-demethylubiquinone 3-O-methyltransferase</fullName>
        <ecNumber evidence="1">2.1.1.-</ecNumber>
    </alternativeName>
    <alternativeName>
        <fullName evidence="1">3-demethylubiquinone-6 3-O-methyltransferase</fullName>
    </alternativeName>
    <alternativeName>
        <fullName evidence="1">Hexaprenyldihydroxybenzoate methyltransferase</fullName>
    </alternativeName>
    <alternativeName>
        <fullName evidence="1 11">Polyprenyldihydroxybenzoate methyltransferase</fullName>
        <ecNumber evidence="1 2">2.1.1.114</ecNumber>
    </alternativeName>
</protein>
<keyword id="KW-0460">Magnesium</keyword>
<keyword id="KW-0472">Membrane</keyword>
<keyword id="KW-0479">Metal-binding</keyword>
<keyword id="KW-0489">Methyltransferase</keyword>
<keyword id="KW-0496">Mitochondrion</keyword>
<keyword id="KW-0999">Mitochondrion inner membrane</keyword>
<keyword id="KW-1185">Reference proteome</keyword>
<keyword id="KW-0949">S-adenosyl-L-methionine</keyword>
<keyword id="KW-0808">Transferase</keyword>
<keyword id="KW-0809">Transit peptide</keyword>
<keyword id="KW-0831">Ubiquinone biosynthesis</keyword>
<comment type="function">
    <text evidence="1 2">O-methyltransferase required for two non-consecutive steps during ubiquinone biosynthesis (By similarity) (PubMed:10419476). Catalyzes the 2 O-methylation of 3,4-dihydroxy-5-(all-trans-hexaprenyl)benzoic acid into 4-hydroxy-3-methoxy-5-(all-trans-hexaprenyl)benzoic acid (By similarity) (PubMed:10419476). Also catalyzes the last step of ubiquinone biosynthesis by mediating methylation of 3-demethylubiquinone into ubiquinone (By similarity). Also able to mediate the methylation of 3-demethylubiquinol-6 into ubiquinol-6 (PubMed:10419476).</text>
</comment>
<comment type="catalytic activity">
    <reaction evidence="1 2">
        <text>3,4-dihydroxy-5-(all-trans-hexaprenyl)benzoate + S-adenosyl-L-methionine = 4-hydroxy-3-methoxy-5-(all-trans-hexaprenyl)benzoate + S-adenosyl-L-homocysteine + H(+)</text>
        <dbReference type="Rhea" id="RHEA:14121"/>
        <dbReference type="ChEBI" id="CHEBI:15378"/>
        <dbReference type="ChEBI" id="CHEBI:57856"/>
        <dbReference type="ChEBI" id="CHEBI:57916"/>
        <dbReference type="ChEBI" id="CHEBI:58373"/>
        <dbReference type="ChEBI" id="CHEBI:59789"/>
        <dbReference type="EC" id="2.1.1.114"/>
    </reaction>
</comment>
<comment type="catalytic activity">
    <reaction evidence="1">
        <text>a 3-demethylubiquinone + S-adenosyl-L-methionine = a ubiquinone + S-adenosyl-L-homocysteine</text>
        <dbReference type="Rhea" id="RHEA:81215"/>
        <dbReference type="Rhea" id="RHEA-COMP:9565"/>
        <dbReference type="Rhea" id="RHEA-COMP:19654"/>
        <dbReference type="ChEBI" id="CHEBI:16389"/>
        <dbReference type="ChEBI" id="CHEBI:57856"/>
        <dbReference type="ChEBI" id="CHEBI:59789"/>
        <dbReference type="ChEBI" id="CHEBI:231825"/>
    </reaction>
</comment>
<comment type="catalytic activity">
    <reaction evidence="1 2">
        <text>3-demethylubiquinol-6 + S-adenosyl-L-methionine = ubiquinol-6 + S-adenosyl-L-homocysteine + H(+)</text>
        <dbReference type="Rhea" id="RHEA:44400"/>
        <dbReference type="ChEBI" id="CHEBI:15378"/>
        <dbReference type="ChEBI" id="CHEBI:52970"/>
        <dbReference type="ChEBI" id="CHEBI:57856"/>
        <dbReference type="ChEBI" id="CHEBI:59789"/>
        <dbReference type="ChEBI" id="CHEBI:64253"/>
        <dbReference type="EC" id="2.1.1.64"/>
    </reaction>
</comment>
<comment type="cofactor">
    <cofactor evidence="1">
        <name>Mg(2+)</name>
        <dbReference type="ChEBI" id="CHEBI:18420"/>
    </cofactor>
</comment>
<comment type="activity regulation">
    <text evidence="7">Regulated in response to catabolite repression.</text>
</comment>
<comment type="pathway">
    <text evidence="1 11">Cofactor biosynthesis; ubiquinone biosynthesis.</text>
</comment>
<comment type="subunit">
    <text evidence="6 8">Component of a multi-subunit COQ enzyme complex, composed of at least COQ3, COQ4, COQ5, COQ6, COQ7 and COQ9 (PubMed:15792955, PubMed:24406904). Interacts directly with COQ4 (PubMed:15792955).</text>
</comment>
<comment type="subcellular location">
    <subcellularLocation>
        <location evidence="1 2 3 5">Mitochondrion inner membrane</location>
        <topology evidence="1 2">Peripheral membrane protein</topology>
        <orientation evidence="1 2">Matrix side</orientation>
    </subcellularLocation>
</comment>
<comment type="miscellaneous">
    <text evidence="4">Present with 259 molecules/cell in log phase SD medium.</text>
</comment>
<comment type="similarity">
    <text evidence="1 10">Belongs to the class I-like SAM-binding methyltransferase superfamily. UbiG/COQ3 family.</text>
</comment>
<comment type="sequence caution" evidence="10">
    <conflict type="erroneous initiation">
        <sequence resource="EMBL-CDS" id="AAB63972"/>
    </conflict>
    <text>Extended N-terminus.</text>
</comment>
<comment type="sequence caution" evidence="10">
    <conflict type="erroneous initiation">
        <sequence resource="EMBL-CDS" id="CAA88165"/>
    </conflict>
    <text>Extended N-terminus.</text>
</comment>
<comment type="sequence caution" evidence="10">
    <conflict type="erroneous initiation">
        <sequence resource="EMBL-CDS" id="CAA99108"/>
    </conflict>
    <text>Extended N-terminus.</text>
</comment>
<comment type="sequence caution" evidence="10">
    <conflict type="erroneous initiation">
        <sequence resource="EMBL-CDS" id="CAA99109"/>
    </conflict>
    <text>Extended N-terminus.</text>
</comment>